<protein>
    <recommendedName>
        <fullName evidence="1">Cyanate hydratase</fullName>
        <shortName evidence="1">Cyanase</shortName>
        <ecNumber evidence="1">4.2.1.104</ecNumber>
    </recommendedName>
    <alternativeName>
        <fullName evidence="1">Cyanate hydrolase</fullName>
    </alternativeName>
    <alternativeName>
        <fullName evidence="1">Cyanate lyase</fullName>
    </alternativeName>
</protein>
<gene>
    <name evidence="1" type="primary">cynS</name>
    <name type="ordered locus">Bamb_5946</name>
</gene>
<feature type="chain" id="PRO_1000051466" description="Cyanate hydratase">
    <location>
        <begin position="1"/>
        <end position="156"/>
    </location>
</feature>
<feature type="active site" evidence="1">
    <location>
        <position position="96"/>
    </location>
</feature>
<feature type="active site" evidence="1">
    <location>
        <position position="99"/>
    </location>
</feature>
<feature type="active site" evidence="1">
    <location>
        <position position="122"/>
    </location>
</feature>
<sequence length="156" mass="16893">MTQSQVTPNAREALTETIVDAKVRKNLTFEAINEGTGLSLAYTTAALLGQHALPEKAAKLVAERLGLDDDAVRLLQTIPVRGSIPGGVPTDPTVYRFYEMVQVYGSTLKALVHEKFGDGIISAINFKLDIQKVPDPEGGERAVITLNGKYLPTKPF</sequence>
<evidence type="ECO:0000255" key="1">
    <source>
        <dbReference type="HAMAP-Rule" id="MF_00535"/>
    </source>
</evidence>
<name>CYNS_BURCM</name>
<reference key="1">
    <citation type="submission" date="2006-08" db="EMBL/GenBank/DDBJ databases">
        <title>Complete sequence of chromosome 3 of Burkholderia cepacia AMMD.</title>
        <authorList>
            <person name="Copeland A."/>
            <person name="Lucas S."/>
            <person name="Lapidus A."/>
            <person name="Barry K."/>
            <person name="Detter J.C."/>
            <person name="Glavina del Rio T."/>
            <person name="Hammon N."/>
            <person name="Israni S."/>
            <person name="Pitluck S."/>
            <person name="Bruce D."/>
            <person name="Chain P."/>
            <person name="Malfatti S."/>
            <person name="Shin M."/>
            <person name="Vergez L."/>
            <person name="Schmutz J."/>
            <person name="Larimer F."/>
            <person name="Land M."/>
            <person name="Hauser L."/>
            <person name="Kyrpides N."/>
            <person name="Kim E."/>
            <person name="Parke J."/>
            <person name="Coenye T."/>
            <person name="Konstantinidis K."/>
            <person name="Ramette A."/>
            <person name="Tiedje J."/>
            <person name="Richardson P."/>
        </authorList>
    </citation>
    <scope>NUCLEOTIDE SEQUENCE [LARGE SCALE GENOMIC DNA]</scope>
    <source>
        <strain>ATCC BAA-244 / DSM 16087 / CCUG 44356 / LMG 19182 / AMMD</strain>
    </source>
</reference>
<proteinExistence type="inferred from homology"/>
<dbReference type="EC" id="4.2.1.104" evidence="1"/>
<dbReference type="EMBL" id="CP000442">
    <property type="protein sequence ID" value="ABI91491.1"/>
    <property type="molecule type" value="Genomic_DNA"/>
</dbReference>
<dbReference type="RefSeq" id="WP_011660834.1">
    <property type="nucleotide sequence ID" value="NZ_CP009800.1"/>
</dbReference>
<dbReference type="SMR" id="Q0B2Y2"/>
<dbReference type="GeneID" id="93089255"/>
<dbReference type="KEGG" id="bam:Bamb_5946"/>
<dbReference type="PATRIC" id="fig|339670.21.peg.6905"/>
<dbReference type="eggNOG" id="COG1513">
    <property type="taxonomic scope" value="Bacteria"/>
</dbReference>
<dbReference type="Proteomes" id="UP000000662">
    <property type="component" value="Chromosome 3"/>
</dbReference>
<dbReference type="GO" id="GO:0008824">
    <property type="term" value="F:cyanate hydratase activity"/>
    <property type="evidence" value="ECO:0007669"/>
    <property type="project" value="UniProtKB-UniRule"/>
</dbReference>
<dbReference type="GO" id="GO:0003677">
    <property type="term" value="F:DNA binding"/>
    <property type="evidence" value="ECO:0007669"/>
    <property type="project" value="InterPro"/>
</dbReference>
<dbReference type="GO" id="GO:0009439">
    <property type="term" value="P:cyanate metabolic process"/>
    <property type="evidence" value="ECO:0007669"/>
    <property type="project" value="UniProtKB-UniRule"/>
</dbReference>
<dbReference type="CDD" id="cd00559">
    <property type="entry name" value="Cyanase_C"/>
    <property type="match status" value="1"/>
</dbReference>
<dbReference type="Gene3D" id="3.30.1160.10">
    <property type="entry name" value="Cyanate lyase, C-terminal domain"/>
    <property type="match status" value="1"/>
</dbReference>
<dbReference type="Gene3D" id="1.10.260.40">
    <property type="entry name" value="lambda repressor-like DNA-binding domains"/>
    <property type="match status" value="1"/>
</dbReference>
<dbReference type="HAMAP" id="MF_00535">
    <property type="entry name" value="Cyanate_hydrat"/>
    <property type="match status" value="1"/>
</dbReference>
<dbReference type="InterPro" id="IPR008076">
    <property type="entry name" value="Cyanase"/>
</dbReference>
<dbReference type="InterPro" id="IPR003712">
    <property type="entry name" value="Cyanate_lyase_C"/>
</dbReference>
<dbReference type="InterPro" id="IPR036581">
    <property type="entry name" value="Cyanate_lyase_C_sf"/>
</dbReference>
<dbReference type="InterPro" id="IPR048564">
    <property type="entry name" value="CYNS_N"/>
</dbReference>
<dbReference type="InterPro" id="IPR010982">
    <property type="entry name" value="Lambda_DNA-bd_dom_sf"/>
</dbReference>
<dbReference type="NCBIfam" id="TIGR00673">
    <property type="entry name" value="cynS"/>
    <property type="match status" value="1"/>
</dbReference>
<dbReference type="NCBIfam" id="NF002773">
    <property type="entry name" value="PRK02866.1"/>
    <property type="match status" value="1"/>
</dbReference>
<dbReference type="PANTHER" id="PTHR34186">
    <property type="entry name" value="CYANATE HYDRATASE"/>
    <property type="match status" value="1"/>
</dbReference>
<dbReference type="PANTHER" id="PTHR34186:SF2">
    <property type="entry name" value="CYANATE HYDRATASE"/>
    <property type="match status" value="1"/>
</dbReference>
<dbReference type="Pfam" id="PF02560">
    <property type="entry name" value="Cyanate_lyase"/>
    <property type="match status" value="1"/>
</dbReference>
<dbReference type="Pfam" id="PF21291">
    <property type="entry name" value="CYNS_N"/>
    <property type="match status" value="1"/>
</dbReference>
<dbReference type="PIRSF" id="PIRSF001263">
    <property type="entry name" value="Cyanate_hydratas"/>
    <property type="match status" value="1"/>
</dbReference>
<dbReference type="PRINTS" id="PR01693">
    <property type="entry name" value="CYANASE"/>
</dbReference>
<dbReference type="SMART" id="SM01116">
    <property type="entry name" value="Cyanate_lyase"/>
    <property type="match status" value="1"/>
</dbReference>
<dbReference type="SUPFAM" id="SSF55234">
    <property type="entry name" value="Cyanase C-terminal domain"/>
    <property type="match status" value="1"/>
</dbReference>
<dbReference type="SUPFAM" id="SSF47413">
    <property type="entry name" value="lambda repressor-like DNA-binding domains"/>
    <property type="match status" value="1"/>
</dbReference>
<accession>Q0B2Y2</accession>
<comment type="function">
    <text evidence="1">Catalyzes the reaction of cyanate with bicarbonate to produce ammonia and carbon dioxide.</text>
</comment>
<comment type="catalytic activity">
    <reaction evidence="1">
        <text>cyanate + hydrogencarbonate + 3 H(+) = NH4(+) + 2 CO2</text>
        <dbReference type="Rhea" id="RHEA:11120"/>
        <dbReference type="ChEBI" id="CHEBI:15378"/>
        <dbReference type="ChEBI" id="CHEBI:16526"/>
        <dbReference type="ChEBI" id="CHEBI:17544"/>
        <dbReference type="ChEBI" id="CHEBI:28938"/>
        <dbReference type="ChEBI" id="CHEBI:29195"/>
        <dbReference type="EC" id="4.2.1.104"/>
    </reaction>
</comment>
<comment type="similarity">
    <text evidence="1">Belongs to the cyanase family.</text>
</comment>
<keyword id="KW-0456">Lyase</keyword>
<organism>
    <name type="scientific">Burkholderia ambifaria (strain ATCC BAA-244 / DSM 16087 / CCUG 44356 / LMG 19182 / AMMD)</name>
    <name type="common">Burkholderia cepacia (strain AMMD)</name>
    <dbReference type="NCBI Taxonomy" id="339670"/>
    <lineage>
        <taxon>Bacteria</taxon>
        <taxon>Pseudomonadati</taxon>
        <taxon>Pseudomonadota</taxon>
        <taxon>Betaproteobacteria</taxon>
        <taxon>Burkholderiales</taxon>
        <taxon>Burkholderiaceae</taxon>
        <taxon>Burkholderia</taxon>
        <taxon>Burkholderia cepacia complex</taxon>
    </lineage>
</organism>